<reference key="1">
    <citation type="journal article" date="2003" name="Nature">
        <title>Genome sequence of Bacillus cereus and comparative analysis with Bacillus anthracis.</title>
        <authorList>
            <person name="Ivanova N."/>
            <person name="Sorokin A."/>
            <person name="Anderson I."/>
            <person name="Galleron N."/>
            <person name="Candelon B."/>
            <person name="Kapatral V."/>
            <person name="Bhattacharyya A."/>
            <person name="Reznik G."/>
            <person name="Mikhailova N."/>
            <person name="Lapidus A."/>
            <person name="Chu L."/>
            <person name="Mazur M."/>
            <person name="Goltsman E."/>
            <person name="Larsen N."/>
            <person name="D'Souza M."/>
            <person name="Walunas T."/>
            <person name="Grechkin Y."/>
            <person name="Pusch G."/>
            <person name="Haselkorn R."/>
            <person name="Fonstein M."/>
            <person name="Ehrlich S.D."/>
            <person name="Overbeek R."/>
            <person name="Kyrpides N.C."/>
        </authorList>
    </citation>
    <scope>NUCLEOTIDE SEQUENCE [LARGE SCALE GENOMIC DNA]</scope>
    <source>
        <strain>ATCC 14579 / DSM 31 / CCUG 7414 / JCM 2152 / NBRC 15305 / NCIMB 9373 / NCTC 2599 / NRRL B-3711</strain>
    </source>
</reference>
<comment type="catalytic activity">
    <reaction evidence="1">
        <text>uridine + ATP = UMP + ADP + H(+)</text>
        <dbReference type="Rhea" id="RHEA:16825"/>
        <dbReference type="ChEBI" id="CHEBI:15378"/>
        <dbReference type="ChEBI" id="CHEBI:16704"/>
        <dbReference type="ChEBI" id="CHEBI:30616"/>
        <dbReference type="ChEBI" id="CHEBI:57865"/>
        <dbReference type="ChEBI" id="CHEBI:456216"/>
        <dbReference type="EC" id="2.7.1.48"/>
    </reaction>
</comment>
<comment type="catalytic activity">
    <reaction evidence="1">
        <text>cytidine + ATP = CMP + ADP + H(+)</text>
        <dbReference type="Rhea" id="RHEA:24674"/>
        <dbReference type="ChEBI" id="CHEBI:15378"/>
        <dbReference type="ChEBI" id="CHEBI:17562"/>
        <dbReference type="ChEBI" id="CHEBI:30616"/>
        <dbReference type="ChEBI" id="CHEBI:60377"/>
        <dbReference type="ChEBI" id="CHEBI:456216"/>
        <dbReference type="EC" id="2.7.1.48"/>
    </reaction>
</comment>
<comment type="pathway">
    <text evidence="1">Pyrimidine metabolism; CTP biosynthesis via salvage pathway; CTP from cytidine: step 1/3.</text>
</comment>
<comment type="pathway">
    <text evidence="1">Pyrimidine metabolism; UMP biosynthesis via salvage pathway; UMP from uridine: step 1/1.</text>
</comment>
<comment type="subcellular location">
    <subcellularLocation>
        <location evidence="1">Cytoplasm</location>
    </subcellularLocation>
</comment>
<comment type="similarity">
    <text evidence="1">Belongs to the uridine kinase family.</text>
</comment>
<feature type="chain" id="PRO_1000017864" description="Uridine kinase">
    <location>
        <begin position="1"/>
        <end position="212"/>
    </location>
</feature>
<feature type="binding site" evidence="1">
    <location>
        <begin position="13"/>
        <end position="20"/>
    </location>
    <ligand>
        <name>ATP</name>
        <dbReference type="ChEBI" id="CHEBI:30616"/>
    </ligand>
</feature>
<evidence type="ECO:0000255" key="1">
    <source>
        <dbReference type="HAMAP-Rule" id="MF_00551"/>
    </source>
</evidence>
<gene>
    <name evidence="1" type="primary">udk</name>
    <name type="ordered locus">BC_4375</name>
</gene>
<sequence length="212" mass="24353">MGTNKPVVIGIAGGSGSGKTSVTKAIFDHFKGHSILILEQDYYYKDQSHLPMEERLKTNYDHPLAFDNDLLIEHLQQLLAYEQIDKPVYDYTLHTRSEEIIPVEPKDVIILEGILILEDPRLCELMDIKLFVDTDADLRILRRMQRDIKERGRTMDSVIDQYVNVVRPMHNQFIEPSKKFADIIIPEGGQNHVAIDIMVTKIATILEQKVNL</sequence>
<protein>
    <recommendedName>
        <fullName evidence="1">Uridine kinase</fullName>
        <ecNumber evidence="1">2.7.1.48</ecNumber>
    </recommendedName>
    <alternativeName>
        <fullName evidence="1">Cytidine monophosphokinase</fullName>
    </alternativeName>
    <alternativeName>
        <fullName evidence="1">Uridine monophosphokinase</fullName>
    </alternativeName>
</protein>
<accession>Q817Z5</accession>
<keyword id="KW-0067">ATP-binding</keyword>
<keyword id="KW-0963">Cytoplasm</keyword>
<keyword id="KW-0418">Kinase</keyword>
<keyword id="KW-0547">Nucleotide-binding</keyword>
<keyword id="KW-1185">Reference proteome</keyword>
<keyword id="KW-0808">Transferase</keyword>
<organism>
    <name type="scientific">Bacillus cereus (strain ATCC 14579 / DSM 31 / CCUG 7414 / JCM 2152 / NBRC 15305 / NCIMB 9373 / NCTC 2599 / NRRL B-3711)</name>
    <dbReference type="NCBI Taxonomy" id="226900"/>
    <lineage>
        <taxon>Bacteria</taxon>
        <taxon>Bacillati</taxon>
        <taxon>Bacillota</taxon>
        <taxon>Bacilli</taxon>
        <taxon>Bacillales</taxon>
        <taxon>Bacillaceae</taxon>
        <taxon>Bacillus</taxon>
        <taxon>Bacillus cereus group</taxon>
    </lineage>
</organism>
<proteinExistence type="inferred from homology"/>
<dbReference type="EC" id="2.7.1.48" evidence="1"/>
<dbReference type="EMBL" id="AE016877">
    <property type="protein sequence ID" value="AAP11288.1"/>
    <property type="molecule type" value="Genomic_DNA"/>
</dbReference>
<dbReference type="RefSeq" id="NP_834087.1">
    <property type="nucleotide sequence ID" value="NC_004722.1"/>
</dbReference>
<dbReference type="RefSeq" id="WP_000537078.1">
    <property type="nucleotide sequence ID" value="NZ_CP138336.1"/>
</dbReference>
<dbReference type="SMR" id="Q817Z5"/>
<dbReference type="STRING" id="226900.BC_4375"/>
<dbReference type="GeneID" id="93006721"/>
<dbReference type="KEGG" id="bce:BC4375"/>
<dbReference type="PATRIC" id="fig|226900.8.peg.4525"/>
<dbReference type="HOGENOM" id="CLU_021278_1_2_9"/>
<dbReference type="OrthoDB" id="9777642at2"/>
<dbReference type="UniPathway" id="UPA00574">
    <property type="reaction ID" value="UER00637"/>
</dbReference>
<dbReference type="UniPathway" id="UPA00579">
    <property type="reaction ID" value="UER00640"/>
</dbReference>
<dbReference type="Proteomes" id="UP000001417">
    <property type="component" value="Chromosome"/>
</dbReference>
<dbReference type="GO" id="GO:0005737">
    <property type="term" value="C:cytoplasm"/>
    <property type="evidence" value="ECO:0000318"/>
    <property type="project" value="GO_Central"/>
</dbReference>
<dbReference type="GO" id="GO:0005524">
    <property type="term" value="F:ATP binding"/>
    <property type="evidence" value="ECO:0007669"/>
    <property type="project" value="UniProtKB-UniRule"/>
</dbReference>
<dbReference type="GO" id="GO:0043771">
    <property type="term" value="F:cytidine kinase activity"/>
    <property type="evidence" value="ECO:0007669"/>
    <property type="project" value="RHEA"/>
</dbReference>
<dbReference type="GO" id="GO:0004849">
    <property type="term" value="F:uridine kinase activity"/>
    <property type="evidence" value="ECO:0007669"/>
    <property type="project" value="UniProtKB-UniRule"/>
</dbReference>
<dbReference type="GO" id="GO:0044211">
    <property type="term" value="P:CTP salvage"/>
    <property type="evidence" value="ECO:0007669"/>
    <property type="project" value="UniProtKB-UniRule"/>
</dbReference>
<dbReference type="GO" id="GO:0044206">
    <property type="term" value="P:UMP salvage"/>
    <property type="evidence" value="ECO:0007669"/>
    <property type="project" value="UniProtKB-UniRule"/>
</dbReference>
<dbReference type="CDD" id="cd02023">
    <property type="entry name" value="UMPK"/>
    <property type="match status" value="1"/>
</dbReference>
<dbReference type="Gene3D" id="3.40.50.300">
    <property type="entry name" value="P-loop containing nucleotide triphosphate hydrolases"/>
    <property type="match status" value="1"/>
</dbReference>
<dbReference type="HAMAP" id="MF_00551">
    <property type="entry name" value="Uridine_kinase"/>
    <property type="match status" value="1"/>
</dbReference>
<dbReference type="InterPro" id="IPR027417">
    <property type="entry name" value="P-loop_NTPase"/>
</dbReference>
<dbReference type="InterPro" id="IPR006083">
    <property type="entry name" value="PRK/URK"/>
</dbReference>
<dbReference type="InterPro" id="IPR026008">
    <property type="entry name" value="Uridine_kinase"/>
</dbReference>
<dbReference type="InterPro" id="IPR000764">
    <property type="entry name" value="Uridine_kinase-like"/>
</dbReference>
<dbReference type="NCBIfam" id="NF004018">
    <property type="entry name" value="PRK05480.1"/>
    <property type="match status" value="1"/>
</dbReference>
<dbReference type="NCBIfam" id="TIGR00235">
    <property type="entry name" value="udk"/>
    <property type="match status" value="1"/>
</dbReference>
<dbReference type="PANTHER" id="PTHR10285">
    <property type="entry name" value="URIDINE KINASE"/>
    <property type="match status" value="1"/>
</dbReference>
<dbReference type="Pfam" id="PF00485">
    <property type="entry name" value="PRK"/>
    <property type="match status" value="1"/>
</dbReference>
<dbReference type="PRINTS" id="PR00988">
    <property type="entry name" value="URIDINKINASE"/>
</dbReference>
<dbReference type="SUPFAM" id="SSF52540">
    <property type="entry name" value="P-loop containing nucleoside triphosphate hydrolases"/>
    <property type="match status" value="1"/>
</dbReference>
<name>URK_BACCR</name>